<keyword id="KW-0002">3D-structure</keyword>
<keyword id="KW-0049">Antioxidant</keyword>
<keyword id="KW-0186">Copper</keyword>
<keyword id="KW-0903">Direct protein sequencing</keyword>
<keyword id="KW-1015">Disulfide bond</keyword>
<keyword id="KW-0971">Glycation</keyword>
<keyword id="KW-0325">Glycoprotein</keyword>
<keyword id="KW-0333">Golgi apparatus</keyword>
<keyword id="KW-0358">Heparin-binding</keyword>
<keyword id="KW-0479">Metal-binding</keyword>
<keyword id="KW-0560">Oxidoreductase</keyword>
<keyword id="KW-1267">Proteomics identification</keyword>
<keyword id="KW-1185">Reference proteome</keyword>
<keyword id="KW-0964">Secreted</keyword>
<keyword id="KW-0732">Signal</keyword>
<keyword id="KW-0862">Zinc</keyword>
<protein>
    <recommendedName>
        <fullName>Extracellular superoxide dismutase [Cu-Zn]</fullName>
        <shortName>EC-SOD</shortName>
        <ecNumber>1.15.1.1</ecNumber>
    </recommendedName>
</protein>
<organism>
    <name type="scientific">Homo sapiens</name>
    <name type="common">Human</name>
    <dbReference type="NCBI Taxonomy" id="9606"/>
    <lineage>
        <taxon>Eukaryota</taxon>
        <taxon>Metazoa</taxon>
        <taxon>Chordata</taxon>
        <taxon>Craniata</taxon>
        <taxon>Vertebrata</taxon>
        <taxon>Euteleostomi</taxon>
        <taxon>Mammalia</taxon>
        <taxon>Eutheria</taxon>
        <taxon>Euarchontoglires</taxon>
        <taxon>Primates</taxon>
        <taxon>Haplorrhini</taxon>
        <taxon>Catarrhini</taxon>
        <taxon>Hominidae</taxon>
        <taxon>Homo</taxon>
    </lineage>
</organism>
<dbReference type="EC" id="1.15.1.1"/>
<dbReference type="EMBL" id="J02947">
    <property type="protein sequence ID" value="AAA66000.1"/>
    <property type="molecule type" value="mRNA"/>
</dbReference>
<dbReference type="EMBL" id="U10116">
    <property type="protein sequence ID" value="AAA62278.1"/>
    <property type="molecule type" value="Genomic_DNA"/>
</dbReference>
<dbReference type="EMBL" id="CR541853">
    <property type="protein sequence ID" value="CAG46651.1"/>
    <property type="molecule type" value="mRNA"/>
</dbReference>
<dbReference type="EMBL" id="AY787834">
    <property type="protein sequence ID" value="AAV40827.1"/>
    <property type="molecule type" value="Genomic_DNA"/>
</dbReference>
<dbReference type="EMBL" id="BC014418">
    <property type="protein sequence ID" value="AAH14418.1"/>
    <property type="molecule type" value="mRNA"/>
</dbReference>
<dbReference type="CCDS" id="CCDS3430.1"/>
<dbReference type="PIR" id="A28301">
    <property type="entry name" value="DSHUEC"/>
</dbReference>
<dbReference type="RefSeq" id="NP_003093.2">
    <property type="nucleotide sequence ID" value="NM_003102.4"/>
</dbReference>
<dbReference type="PDB" id="2JLP">
    <property type="method" value="X-ray"/>
    <property type="resolution" value="1.70 A"/>
    <property type="chains" value="A/B/C/D=19-240"/>
</dbReference>
<dbReference type="PDBsum" id="2JLP"/>
<dbReference type="SMR" id="P08294"/>
<dbReference type="BioGRID" id="112532">
    <property type="interactions" value="11"/>
</dbReference>
<dbReference type="FunCoup" id="P08294">
    <property type="interactions" value="83"/>
</dbReference>
<dbReference type="IntAct" id="P08294">
    <property type="interactions" value="8"/>
</dbReference>
<dbReference type="STRING" id="9606.ENSP00000371554"/>
<dbReference type="BindingDB" id="P08294"/>
<dbReference type="ChEMBL" id="CHEMBL2069159"/>
<dbReference type="DrugBank" id="DB09096">
    <property type="generic name" value="Benzoyl peroxide"/>
</dbReference>
<dbReference type="GlyConnect" id="1233">
    <property type="glycosylation" value="3 N-Linked glycans (1 site)"/>
</dbReference>
<dbReference type="GlyCosmos" id="P08294">
    <property type="glycosylation" value="4 sites, 3 glycans"/>
</dbReference>
<dbReference type="GlyGen" id="P08294">
    <property type="glycosylation" value="2 sites, 90 N-linked glycans (1 site), 1 O-linked glycan (1 site)"/>
</dbReference>
<dbReference type="iPTMnet" id="P08294"/>
<dbReference type="PhosphoSitePlus" id="P08294"/>
<dbReference type="BioMuta" id="SOD3"/>
<dbReference type="DMDM" id="108885292"/>
<dbReference type="jPOST" id="P08294"/>
<dbReference type="MassIVE" id="P08294"/>
<dbReference type="PaxDb" id="9606-ENSP00000371554"/>
<dbReference type="PeptideAtlas" id="P08294"/>
<dbReference type="ProteomicsDB" id="52104"/>
<dbReference type="Antibodypedia" id="3278">
    <property type="antibodies" value="545 antibodies from 36 providers"/>
</dbReference>
<dbReference type="DNASU" id="6649"/>
<dbReference type="Ensembl" id="ENST00000382120.4">
    <property type="protein sequence ID" value="ENSP00000371554.3"/>
    <property type="gene ID" value="ENSG00000109610.6"/>
</dbReference>
<dbReference type="GeneID" id="6649"/>
<dbReference type="KEGG" id="hsa:6649"/>
<dbReference type="MANE-Select" id="ENST00000382120.4">
    <property type="protein sequence ID" value="ENSP00000371554.3"/>
    <property type="RefSeq nucleotide sequence ID" value="NM_003102.4"/>
    <property type="RefSeq protein sequence ID" value="NP_003093.2"/>
</dbReference>
<dbReference type="UCSC" id="uc003gqz.4">
    <property type="organism name" value="human"/>
</dbReference>
<dbReference type="AGR" id="HGNC:11181"/>
<dbReference type="CTD" id="6649"/>
<dbReference type="DisGeNET" id="6649"/>
<dbReference type="GeneCards" id="SOD3"/>
<dbReference type="HGNC" id="HGNC:11181">
    <property type="gene designation" value="SOD3"/>
</dbReference>
<dbReference type="HPA" id="ENSG00000109610">
    <property type="expression patterns" value="Tissue enriched (choroid)"/>
</dbReference>
<dbReference type="MIM" id="185490">
    <property type="type" value="gene"/>
</dbReference>
<dbReference type="neXtProt" id="NX_P08294"/>
<dbReference type="OpenTargets" id="ENSG00000109610"/>
<dbReference type="PharmGKB" id="PA36018"/>
<dbReference type="VEuPathDB" id="HostDB:ENSG00000109610"/>
<dbReference type="eggNOG" id="KOG0441">
    <property type="taxonomic scope" value="Eukaryota"/>
</dbReference>
<dbReference type="GeneTree" id="ENSGT00940000162224"/>
<dbReference type="HOGENOM" id="CLU_056632_3_1_1"/>
<dbReference type="InParanoid" id="P08294"/>
<dbReference type="OMA" id="DGSLWKY"/>
<dbReference type="OrthoDB" id="666972at2759"/>
<dbReference type="PAN-GO" id="P08294">
    <property type="GO annotations" value="3 GO annotations based on evolutionary models"/>
</dbReference>
<dbReference type="PhylomeDB" id="P08294"/>
<dbReference type="TreeFam" id="TF105133"/>
<dbReference type="BioCyc" id="MetaCyc:HS03242-MONOMER"/>
<dbReference type="BRENDA" id="1.15.1.1">
    <property type="organism ID" value="2681"/>
</dbReference>
<dbReference type="PathwayCommons" id="P08294"/>
<dbReference type="Reactome" id="R-HSA-3299685">
    <property type="pathway name" value="Detoxification of Reactive Oxygen Species"/>
</dbReference>
<dbReference type="Reactome" id="R-HSA-9818027">
    <property type="pathway name" value="NFE2L2 regulating anti-oxidant/detoxification enzymes"/>
</dbReference>
<dbReference type="SignaLink" id="P08294"/>
<dbReference type="SIGNOR" id="P08294"/>
<dbReference type="BioGRID-ORCS" id="6649">
    <property type="hits" value="11 hits in 1153 CRISPR screens"/>
</dbReference>
<dbReference type="ChiTaRS" id="SOD3">
    <property type="organism name" value="human"/>
</dbReference>
<dbReference type="EvolutionaryTrace" id="P08294"/>
<dbReference type="GeneWiki" id="SOD3"/>
<dbReference type="GenomeRNAi" id="6649"/>
<dbReference type="Pharos" id="P08294">
    <property type="development level" value="Tbio"/>
</dbReference>
<dbReference type="PRO" id="PR:P08294"/>
<dbReference type="Proteomes" id="UP000005640">
    <property type="component" value="Chromosome 4"/>
</dbReference>
<dbReference type="RNAct" id="P08294">
    <property type="molecule type" value="protein"/>
</dbReference>
<dbReference type="Bgee" id="ENSG00000109610">
    <property type="expression patterns" value="Expressed in descending thoracic aorta and 150 other cell types or tissues"/>
</dbReference>
<dbReference type="ExpressionAtlas" id="P08294">
    <property type="expression patterns" value="baseline and differential"/>
</dbReference>
<dbReference type="GO" id="GO:0062023">
    <property type="term" value="C:collagen-containing extracellular matrix"/>
    <property type="evidence" value="ECO:0000314"/>
    <property type="project" value="UniProtKB"/>
</dbReference>
<dbReference type="GO" id="GO:0070062">
    <property type="term" value="C:extracellular exosome"/>
    <property type="evidence" value="ECO:0007005"/>
    <property type="project" value="UniProtKB"/>
</dbReference>
<dbReference type="GO" id="GO:0005576">
    <property type="term" value="C:extracellular region"/>
    <property type="evidence" value="ECO:0007005"/>
    <property type="project" value="BHF-UCL"/>
</dbReference>
<dbReference type="GO" id="GO:0005615">
    <property type="term" value="C:extracellular space"/>
    <property type="evidence" value="ECO:0007005"/>
    <property type="project" value="BHF-UCL"/>
</dbReference>
<dbReference type="GO" id="GO:0005796">
    <property type="term" value="C:Golgi lumen"/>
    <property type="evidence" value="ECO:0000304"/>
    <property type="project" value="Reactome"/>
</dbReference>
<dbReference type="GO" id="GO:0005507">
    <property type="term" value="F:copper ion binding"/>
    <property type="evidence" value="ECO:0000318"/>
    <property type="project" value="GO_Central"/>
</dbReference>
<dbReference type="GO" id="GO:0008201">
    <property type="term" value="F:heparin binding"/>
    <property type="evidence" value="ECO:0007669"/>
    <property type="project" value="UniProtKB-KW"/>
</dbReference>
<dbReference type="GO" id="GO:0060090">
    <property type="term" value="F:molecular adaptor activity"/>
    <property type="evidence" value="ECO:0000269"/>
    <property type="project" value="DisProt"/>
</dbReference>
<dbReference type="GO" id="GO:0004784">
    <property type="term" value="F:superoxide dismutase activity"/>
    <property type="evidence" value="ECO:0000318"/>
    <property type="project" value="GO_Central"/>
</dbReference>
<dbReference type="GO" id="GO:0019430">
    <property type="term" value="P:removal of superoxide radicals"/>
    <property type="evidence" value="ECO:0000318"/>
    <property type="project" value="GO_Central"/>
</dbReference>
<dbReference type="GO" id="GO:0001666">
    <property type="term" value="P:response to hypoxia"/>
    <property type="evidence" value="ECO:0007669"/>
    <property type="project" value="Ensembl"/>
</dbReference>
<dbReference type="CDD" id="cd00305">
    <property type="entry name" value="Cu-Zn_Superoxide_Dismutase"/>
    <property type="match status" value="1"/>
</dbReference>
<dbReference type="DisProt" id="DP02656"/>
<dbReference type="FunFam" id="2.60.40.200:FF:000008">
    <property type="entry name" value="Superoxide dismutase [Cu-Zn]"/>
    <property type="match status" value="1"/>
</dbReference>
<dbReference type="Gene3D" id="2.60.40.200">
    <property type="entry name" value="Superoxide dismutase, copper/zinc binding domain"/>
    <property type="match status" value="1"/>
</dbReference>
<dbReference type="InterPro" id="IPR036423">
    <property type="entry name" value="SOD-like_Cu/Zn_dom_sf"/>
</dbReference>
<dbReference type="InterPro" id="IPR024134">
    <property type="entry name" value="SOD_Cu/Zn_/chaperone"/>
</dbReference>
<dbReference type="InterPro" id="IPR018152">
    <property type="entry name" value="SOD_Cu/Zn_BS"/>
</dbReference>
<dbReference type="InterPro" id="IPR001424">
    <property type="entry name" value="SOD_Cu_Zn_dom"/>
</dbReference>
<dbReference type="PANTHER" id="PTHR10003">
    <property type="entry name" value="SUPEROXIDE DISMUTASE CU-ZN -RELATED"/>
    <property type="match status" value="1"/>
</dbReference>
<dbReference type="Pfam" id="PF00080">
    <property type="entry name" value="Sod_Cu"/>
    <property type="match status" value="1"/>
</dbReference>
<dbReference type="PRINTS" id="PR00068">
    <property type="entry name" value="CUZNDISMTASE"/>
</dbReference>
<dbReference type="SUPFAM" id="SSF49329">
    <property type="entry name" value="Cu,Zn superoxide dismutase-like"/>
    <property type="match status" value="1"/>
</dbReference>
<dbReference type="PROSITE" id="PS00087">
    <property type="entry name" value="SOD_CU_ZN_1"/>
    <property type="match status" value="1"/>
</dbReference>
<dbReference type="PROSITE" id="PS00332">
    <property type="entry name" value="SOD_CU_ZN_2"/>
    <property type="match status" value="1"/>
</dbReference>
<name>SODE_HUMAN</name>
<sequence>MLALLCSCLLLAAGASDAWTGEDSAEPNSDSAEWIRDMYAKVTEIWQEVMQRRDDDGALHAACQVQPSATLDAAQPRVTGVVLFRQLAPRAKLDAFFALEGFPTEPNSSSRAIHVHQFGDLSQGCESTGPHYNPLAVPHPQHPGDFGNFAVRDGSLWRYRAGLAASLAGPHSIVGRAVVVHAGEDDLGRGGNQASVENGNAGRRLACCVVGVCGPGLWERQAREHSERKKRRRESECKAA</sequence>
<accession>P08294</accession>
<accession>Q5U781</accession>
<accession>Q6FHA2</accession>
<reference key="1">
    <citation type="journal article" date="1987" name="Proc. Natl. Acad. Sci. U.S.A.">
        <title>Isolation and sequence of complementary DNA encoding human extracellular superoxide dismutase.</title>
        <authorList>
            <person name="Hjalmarsson K."/>
            <person name="Marklund S.L."/>
            <person name="Engstroem A."/>
            <person name="Edlund T."/>
        </authorList>
    </citation>
    <scope>NUCLEOTIDE SEQUENCE [MRNA]</scope>
    <scope>PARTIAL PROTEIN SEQUENCE</scope>
    <scope>VARIANT THR-58</scope>
</reference>
<reference key="2">
    <citation type="journal article" date="1994" name="Genomics">
        <title>Extracellular superoxide dismutase (SOD3): tissue-specific expression, genomic characterization, and computer-assisted sequence analysis of the human EC SOD gene.</title>
        <authorList>
            <person name="Folz R.J."/>
            <person name="Crapo J.D."/>
        </authorList>
    </citation>
    <scope>NUCLEOTIDE SEQUENCE [GENOMIC DNA]</scope>
    <scope>VARIANT THR-58</scope>
    <source>
        <tissue>Blood</tissue>
    </source>
</reference>
<reference key="3">
    <citation type="submission" date="2004-06" db="EMBL/GenBank/DDBJ databases">
        <title>Cloning of human full open reading frames in Gateway(TM) system entry vector (pDONR201).</title>
        <authorList>
            <person name="Halleck A."/>
            <person name="Ebert L."/>
            <person name="Mkoundinya M."/>
            <person name="Schick M."/>
            <person name="Eisenstein S."/>
            <person name="Neubert P."/>
            <person name="Kstrang K."/>
            <person name="Schatten R."/>
            <person name="Shen B."/>
            <person name="Henze S."/>
            <person name="Mar W."/>
            <person name="Korn B."/>
            <person name="Zuo D."/>
            <person name="Hu Y."/>
            <person name="LaBaer J."/>
        </authorList>
    </citation>
    <scope>NUCLEOTIDE SEQUENCE [LARGE SCALE MRNA]</scope>
    <scope>VARIANT THR-58</scope>
</reference>
<reference key="4">
    <citation type="submission" date="2004-10" db="EMBL/GenBank/DDBJ databases">
        <authorList>
            <consortium name="NIEHS SNPs program"/>
        </authorList>
    </citation>
    <scope>NUCLEOTIDE SEQUENCE [GENOMIC DNA]</scope>
    <scope>VARIANTS THR-58; THR-91 AND GLY-231</scope>
</reference>
<reference key="5">
    <citation type="journal article" date="2004" name="Genome Res.">
        <title>The status, quality, and expansion of the NIH full-length cDNA project: the Mammalian Gene Collection (MGC).</title>
        <authorList>
            <consortium name="The MGC Project Team"/>
        </authorList>
    </citation>
    <scope>NUCLEOTIDE SEQUENCE [LARGE SCALE MRNA]</scope>
    <scope>VARIANT THR-58</scope>
    <source>
        <tissue>Colon</tissue>
    </source>
</reference>
<reference key="6">
    <citation type="journal article" date="1992" name="Free Radic. Biol. Med.">
        <title>The site of nonenzymic glycation of human extracellular-superoxide dismutase in vitro.</title>
        <authorList>
            <person name="Adachi T."/>
            <person name="Ohta H."/>
            <person name="Hayashi K."/>
            <person name="Hirano K."/>
            <person name="Marklund S.L."/>
        </authorList>
    </citation>
    <scope>GLYCATION AT LYS-229 AND LYS-230</scope>
</reference>
<reference key="7">
    <citation type="journal article" date="2005" name="Int. J. Biochem. Cell Biol.">
        <title>Extracellular superoxide dismutase.</title>
        <authorList>
            <person name="Nozik-Grayck E."/>
            <person name="Suliman H.B."/>
            <person name="Piantadosi C.A."/>
        </authorList>
    </citation>
    <scope>REVIEW</scope>
</reference>
<reference key="8">
    <citation type="journal article" date="2005" name="J. Proteome Res.">
        <title>Human plasma N-glycoproteome analysis by immunoaffinity subtraction, hydrazide chemistry, and mass spectrometry.</title>
        <authorList>
            <person name="Liu T."/>
            <person name="Qian W.-J."/>
            <person name="Gritsenko M.A."/>
            <person name="Camp D.G. II"/>
            <person name="Monroe M.E."/>
            <person name="Moore R.J."/>
            <person name="Smith R.D."/>
        </authorList>
    </citation>
    <scope>GLYCOSYLATION [LARGE SCALE ANALYSIS] AT ASN-107</scope>
    <source>
        <tissue>Plasma</tissue>
    </source>
</reference>
<reference key="9">
    <citation type="journal article" date="2006" name="FASEB J.">
        <title>Essential role for the Menkes ATPase in activation of extracellular superoxide dismutase: implication for vascular oxidative stress.</title>
        <authorList>
            <person name="Qin Z."/>
            <person name="Itoh S."/>
            <person name="Jeney V."/>
            <person name="Ushio-Fukai M."/>
            <person name="Fukai T."/>
        </authorList>
    </citation>
    <scope>INTERACTION WITH SOD3</scope>
</reference>
<reference key="10">
    <citation type="journal article" date="2009" name="J. Proteome Res.">
        <title>Glycoproteomics analysis of human liver tissue by combination of multiple enzyme digestion and hydrazide chemistry.</title>
        <authorList>
            <person name="Chen R."/>
            <person name="Jiang X."/>
            <person name="Sun D."/>
            <person name="Han G."/>
            <person name="Wang F."/>
            <person name="Ye M."/>
            <person name="Wang L."/>
            <person name="Zou H."/>
        </authorList>
    </citation>
    <scope>GLYCOSYLATION [LARGE SCALE ANALYSIS] AT ASN-107</scope>
    <source>
        <tissue>Liver</tissue>
    </source>
</reference>
<reference key="11">
    <citation type="journal article" date="2009" name="J. Mol. Biol.">
        <title>The structure of human extracellular copper-zinc superoxide dismutase at 1.7 A resolution: insights into heparin and collagen binding.</title>
        <authorList>
            <person name="Antonyuk S.V."/>
            <person name="Strange R.W."/>
            <person name="Marklund S.L."/>
            <person name="Hasnain S.S."/>
        </authorList>
    </citation>
    <scope>X-RAY CRYSTALLOGRAPHY (1.7 ANGSTROMS) OF 19-240</scope>
    <scope>SUBUNIT</scope>
    <scope>METAL-BINDING SITES</scope>
    <scope>DISULFIDE BONDS</scope>
</reference>
<reference key="12">
    <citation type="journal article" date="1994" name="J. Biol. Chem.">
        <title>10-fold increase in human plasma extracellular superoxide dismutase content caused by a mutation in heparin-binding domain.</title>
        <authorList>
            <person name="Sandstrom J."/>
            <person name="Nilsson P."/>
            <person name="Karlsson K."/>
            <person name="Marklund S.L."/>
        </authorList>
    </citation>
    <scope>VARIANT GLY-231</scope>
</reference>
<reference key="13">
    <citation type="journal article" date="1995" name="Jpn. J. Hum. Genet.">
        <title>Molecular analysis of extracellular-superoxide dismutase gene associated with high level in serum.</title>
        <authorList>
            <person name="Yamada H."/>
            <person name="Yamada Y."/>
            <person name="Adachi T."/>
            <person name="Goto H."/>
            <person name="Ogasawara N."/>
            <person name="Futenma A."/>
            <person name="Kitano M."/>
            <person name="Hirano K."/>
            <person name="Kato K."/>
        </authorList>
    </citation>
    <scope>VARIANT GLY-231</scope>
</reference>
<reference key="14">
    <citation type="journal article" date="1996" name="Biochem. J.">
        <title>Substitution of glycine for arginine-213 in extracellular-superoxide dismutase impairs affinity for heparin and endothelial cell surface.</title>
        <authorList>
            <person name="Adachi T."/>
            <person name="Yamada H."/>
            <person name="Yamada Y."/>
            <person name="Morihara N."/>
            <person name="Yamazaki N."/>
            <person name="Murakami T."/>
            <person name="Futenma A."/>
            <person name="Kato K."/>
            <person name="Hirano K."/>
        </authorList>
    </citation>
    <scope>VARIANT GLY-231</scope>
</reference>
<reference key="15">
    <citation type="journal article" date="1996" name="J. Biochem.">
        <title>An arginine-213 to glycine mutation in human extracellular-superoxide dismutase reduces susceptibility to trypsin-like proteinases.</title>
        <authorList>
            <person name="Adachi T."/>
            <person name="Morihara N."/>
            <person name="Yamazaki N."/>
            <person name="Yamada H."/>
            <person name="Futenma A."/>
            <person name="Kato K."/>
            <person name="Hirano K."/>
        </authorList>
    </citation>
    <scope>VARIANT GLY-231</scope>
</reference>
<proteinExistence type="evidence at protein level"/>
<evidence type="ECO:0000250" key="1"/>
<evidence type="ECO:0000250" key="2">
    <source>
        <dbReference type="UniProtKB" id="O09164"/>
    </source>
</evidence>
<evidence type="ECO:0000269" key="3">
    <source>
    </source>
</evidence>
<evidence type="ECO:0000269" key="4">
    <source>
    </source>
</evidence>
<evidence type="ECO:0000269" key="5">
    <source>
    </source>
</evidence>
<evidence type="ECO:0000269" key="6">
    <source>
    </source>
</evidence>
<evidence type="ECO:0000269" key="7">
    <source>
    </source>
</evidence>
<evidence type="ECO:0000269" key="8">
    <source>
    </source>
</evidence>
<evidence type="ECO:0000269" key="9">
    <source>
    </source>
</evidence>
<evidence type="ECO:0000269" key="10">
    <source>
    </source>
</evidence>
<evidence type="ECO:0000269" key="11">
    <source>
    </source>
</evidence>
<evidence type="ECO:0000269" key="12">
    <source>
    </source>
</evidence>
<evidence type="ECO:0000269" key="13">
    <source>
    </source>
</evidence>
<evidence type="ECO:0000269" key="14">
    <source>
    </source>
</evidence>
<evidence type="ECO:0000269" key="15">
    <source ref="3"/>
</evidence>
<evidence type="ECO:0000269" key="16">
    <source ref="4"/>
</evidence>
<evidence type="ECO:0000305" key="17"/>
<evidence type="ECO:0007829" key="18">
    <source>
        <dbReference type="PDB" id="2JLP"/>
    </source>
</evidence>
<comment type="function">
    <text>Protect the extracellular space from toxic effect of reactive oxygen intermediates by converting superoxide radicals into hydrogen peroxide and oxygen.</text>
</comment>
<comment type="catalytic activity">
    <reaction>
        <text>2 superoxide + 2 H(+) = H2O2 + O2</text>
        <dbReference type="Rhea" id="RHEA:20696"/>
        <dbReference type="ChEBI" id="CHEBI:15378"/>
        <dbReference type="ChEBI" id="CHEBI:15379"/>
        <dbReference type="ChEBI" id="CHEBI:16240"/>
        <dbReference type="ChEBI" id="CHEBI:18421"/>
        <dbReference type="EC" id="1.15.1.1"/>
    </reaction>
</comment>
<comment type="cofactor">
    <cofactor evidence="1">
        <name>Cu cation</name>
        <dbReference type="ChEBI" id="CHEBI:23378"/>
    </cofactor>
    <text evidence="1">Binds 1 copper ion per subunit.</text>
</comment>
<comment type="cofactor">
    <cofactor evidence="1">
        <name>Zn(2+)</name>
        <dbReference type="ChEBI" id="CHEBI:29105"/>
    </cofactor>
    <text evidence="1">Binds 1 zinc ion per subunit.</text>
</comment>
<comment type="subunit">
    <text evidence="6 8">Homotetramer (PubMed:19289127). Directly interacts with ATP7A; this interaction is copper-dependent and is required for SOD3 activity (PubMed:16371425).</text>
</comment>
<comment type="interaction">
    <interactant intactId="EBI-10195782">
        <id>P08294</id>
    </interactant>
    <interactant intactId="EBI-12092171">
        <id>Q12797-6</id>
        <label>ASPH</label>
    </interactant>
    <organismsDiffer>false</organismsDiffer>
    <experiments>3</experiments>
</comment>
<comment type="interaction">
    <interactant intactId="EBI-10195782">
        <id>P08294</id>
    </interactant>
    <interactant intactId="EBI-22452746">
        <id>Q9NZI2-2</id>
        <label>KCNIP1</label>
    </interactant>
    <organismsDiffer>false</organismsDiffer>
    <experiments>3</experiments>
</comment>
<comment type="interaction">
    <interactant intactId="EBI-10195782">
        <id>P08294</id>
    </interactant>
    <interactant intactId="EBI-751501">
        <id>Q9Y2W7</id>
        <label>KCNIP3</label>
    </interactant>
    <organismsDiffer>false</organismsDiffer>
    <experiments>6</experiments>
</comment>
<comment type="interaction">
    <interactant intactId="EBI-10195782">
        <id>P08294</id>
    </interactant>
    <interactant intactId="EBI-347996">
        <id>O43765</id>
        <label>SGTA</label>
    </interactant>
    <organismsDiffer>false</organismsDiffer>
    <experiments>3</experiments>
</comment>
<comment type="interaction">
    <interactant intactId="EBI-10195782">
        <id>P08294</id>
    </interactant>
    <interactant intactId="EBI-744081">
        <id>Q96EQ0</id>
        <label>SGTB</label>
    </interactant>
    <organismsDiffer>false</organismsDiffer>
    <experiments>3</experiments>
</comment>
<comment type="interaction">
    <interactant intactId="EBI-10195782">
        <id>P08294</id>
    </interactant>
    <interactant intactId="EBI-741480">
        <id>Q9UMX0</id>
        <label>UBQLN1</label>
    </interactant>
    <organismsDiffer>false</organismsDiffer>
    <experiments>3</experiments>
</comment>
<comment type="interaction">
    <interactant intactId="EBI-10195782">
        <id>P08294</id>
    </interactant>
    <interactant intactId="EBI-947187">
        <id>Q9UHD9</id>
        <label>UBQLN2</label>
    </interactant>
    <organismsDiffer>false</organismsDiffer>
    <experiments>3</experiments>
</comment>
<comment type="subcellular location">
    <subcellularLocation>
        <location>Secreted</location>
        <location>Extracellular space</location>
    </subcellularLocation>
    <subcellularLocation>
        <location evidence="2">Golgi apparatus</location>
        <location evidence="2">trans-Golgi network</location>
    </subcellularLocation>
    <text>99% of EC-SOD is anchored to heparan sulfate proteoglycans in the tissue interstitium, and 1% is located in the vasculature in equilibrium between the plasma and the endothelium.</text>
</comment>
<comment type="tissue specificity">
    <text>Expressed in blood vessels, heart, lung, kidney and placenta. Major SOD isoenzyme in extracellular fluids such as plasma, lymph and synovial fluid.</text>
</comment>
<comment type="polymorphism">
    <text evidence="10 12 13">The variant Gly-231 which is found in about 2.2% of individual displays a 10-fold increased plasma EC-SOD content due to reduced heparin-binding affinity and thus the impairment of its binding ability to endothelial cell surface.</text>
</comment>
<comment type="similarity">
    <text evidence="17">Belongs to the Cu-Zn superoxide dismutase family.</text>
</comment>
<comment type="online information" name="Wikipedia">
    <link uri="https://en.wikipedia.org/wiki/Superoxide_dismutase"/>
    <text>Superoxide dismutase entry</text>
</comment>
<gene>
    <name type="primary">SOD3</name>
</gene>
<feature type="signal peptide">
    <location>
        <begin position="1"/>
        <end position="18"/>
    </location>
</feature>
<feature type="chain" id="PRO_0000032855" description="Extracellular superoxide dismutase [Cu-Zn]">
    <location>
        <begin position="19"/>
        <end position="240"/>
    </location>
</feature>
<feature type="binding site">
    <location>
        <position position="114"/>
    </location>
    <ligand>
        <name>Cu cation</name>
        <dbReference type="ChEBI" id="CHEBI:23378"/>
        <note>catalytic</note>
    </ligand>
</feature>
<feature type="binding site">
    <location>
        <position position="116"/>
    </location>
    <ligand>
        <name>Cu cation</name>
        <dbReference type="ChEBI" id="CHEBI:23378"/>
        <note>catalytic</note>
    </ligand>
</feature>
<feature type="binding site">
    <location>
        <position position="131"/>
    </location>
    <ligand>
        <name>Cu cation</name>
        <dbReference type="ChEBI" id="CHEBI:23378"/>
        <note>catalytic</note>
    </ligand>
</feature>
<feature type="binding site">
    <location>
        <position position="131"/>
    </location>
    <ligand>
        <name>Zn(2+)</name>
        <dbReference type="ChEBI" id="CHEBI:29105"/>
        <note>structural</note>
    </ligand>
</feature>
<feature type="binding site">
    <location>
        <position position="139"/>
    </location>
    <ligand>
        <name>Zn(2+)</name>
        <dbReference type="ChEBI" id="CHEBI:29105"/>
        <note>structural</note>
    </ligand>
</feature>
<feature type="binding site">
    <location>
        <position position="142"/>
    </location>
    <ligand>
        <name>Zn(2+)</name>
        <dbReference type="ChEBI" id="CHEBI:29105"/>
        <note>structural</note>
    </ligand>
</feature>
<feature type="binding site">
    <location>
        <position position="145"/>
    </location>
    <ligand>
        <name>Zn(2+)</name>
        <dbReference type="ChEBI" id="CHEBI:29105"/>
        <note>structural</note>
    </ligand>
</feature>
<feature type="binding site">
    <location>
        <position position="181"/>
    </location>
    <ligand>
        <name>Cu cation</name>
        <dbReference type="ChEBI" id="CHEBI:23378"/>
        <note>catalytic</note>
    </ligand>
</feature>
<feature type="site" description="Not glycated">
    <location>
        <position position="41"/>
    </location>
</feature>
<feature type="site" description="Not glycated">
    <location>
        <position position="92"/>
    </location>
</feature>
<feature type="site" description="Not glycated">
    <location>
        <position position="238"/>
    </location>
</feature>
<feature type="glycosylation site" description="N-linked (GlcNAc...) asparagine" evidence="5 7">
    <location>
        <position position="107"/>
    </location>
</feature>
<feature type="glycosylation site" description="N-linked (Glc) (glycation) lysine; in vitro" evidence="3">
    <location>
        <position position="229"/>
    </location>
</feature>
<feature type="glycosylation site" description="N-linked (Glc) (glycation) lysine; in vitro" evidence="3">
    <location>
        <position position="230"/>
    </location>
</feature>
<feature type="disulfide bond" evidence="8">
    <location>
        <begin position="63"/>
        <end position="208"/>
    </location>
</feature>
<feature type="disulfide bond" evidence="8">
    <location>
        <begin position="125"/>
        <end position="207"/>
    </location>
</feature>
<feature type="sequence variant" id="VAR_020776" description="In dbSNP:rs2536512." evidence="4 9 11 15 16">
    <original>A</original>
    <variation>T</variation>
    <location>
        <position position="58"/>
    </location>
</feature>
<feature type="sequence variant" id="VAR_020777" description="In dbSNP:rs17879876." evidence="16">
    <original>A</original>
    <variation>T</variation>
    <location>
        <position position="91"/>
    </location>
</feature>
<feature type="sequence variant" id="VAR_014705" description="In dbSNP:rs1799895." evidence="10 12 13 14 16">
    <original>R</original>
    <variation>G</variation>
    <location>
        <position position="231"/>
    </location>
</feature>
<feature type="strand" evidence="18">
    <location>
        <begin position="59"/>
        <end position="67"/>
    </location>
</feature>
<feature type="strand" evidence="18">
    <location>
        <begin position="79"/>
        <end position="88"/>
    </location>
</feature>
<feature type="strand" evidence="18">
    <location>
        <begin position="93"/>
        <end position="100"/>
    </location>
</feature>
<feature type="strand" evidence="18">
    <location>
        <begin position="104"/>
        <end position="117"/>
    </location>
</feature>
<feature type="helix" evidence="18">
    <location>
        <begin position="124"/>
        <end position="128"/>
    </location>
</feature>
<feature type="strand" evidence="18">
    <location>
        <begin position="145"/>
        <end position="152"/>
    </location>
</feature>
<feature type="strand" evidence="18">
    <location>
        <begin position="155"/>
        <end position="164"/>
    </location>
</feature>
<feature type="strand" evidence="18">
    <location>
        <begin position="166"/>
        <end position="169"/>
    </location>
</feature>
<feature type="strand" evidence="18">
    <location>
        <begin position="176"/>
        <end position="183"/>
    </location>
</feature>
<feature type="strand" evidence="18">
    <location>
        <begin position="190"/>
        <end position="192"/>
    </location>
</feature>
<feature type="helix" evidence="18">
    <location>
        <begin position="195"/>
        <end position="198"/>
    </location>
</feature>
<feature type="strand" evidence="18">
    <location>
        <begin position="204"/>
        <end position="209"/>
    </location>
</feature>
<feature type="helix" evidence="18">
    <location>
        <begin position="216"/>
        <end position="222"/>
    </location>
</feature>